<sequence>MAYRKLGRNTGHRGSMLRNLATSLLKHERIQTTEARAKEVNAIAEKMITLGKQGDLAARRNALTYLLEEDVVTKLFTEIAPKYADRQGGYTRVIKVGPRRGDAAEMVLIELV</sequence>
<protein>
    <recommendedName>
        <fullName evidence="1">Large ribosomal subunit protein bL17</fullName>
    </recommendedName>
    <alternativeName>
        <fullName evidence="2">50S ribosomal protein L17</fullName>
    </alternativeName>
</protein>
<proteinExistence type="inferred from homology"/>
<evidence type="ECO:0000255" key="1">
    <source>
        <dbReference type="HAMAP-Rule" id="MF_01368"/>
    </source>
</evidence>
<evidence type="ECO:0000305" key="2"/>
<feature type="chain" id="PRO_1000055814" description="Large ribosomal subunit protein bL17">
    <location>
        <begin position="1"/>
        <end position="112"/>
    </location>
</feature>
<name>RL17_DESHY</name>
<accession>Q250K3</accession>
<comment type="subunit">
    <text evidence="1">Part of the 50S ribosomal subunit. Contacts protein L32.</text>
</comment>
<comment type="similarity">
    <text evidence="1">Belongs to the bacterial ribosomal protein bL17 family.</text>
</comment>
<gene>
    <name evidence="1" type="primary">rplQ</name>
    <name type="ordered locus">DSY0500</name>
</gene>
<organism>
    <name type="scientific">Desulfitobacterium hafniense (strain Y51)</name>
    <dbReference type="NCBI Taxonomy" id="138119"/>
    <lineage>
        <taxon>Bacteria</taxon>
        <taxon>Bacillati</taxon>
        <taxon>Bacillota</taxon>
        <taxon>Clostridia</taxon>
        <taxon>Eubacteriales</taxon>
        <taxon>Desulfitobacteriaceae</taxon>
        <taxon>Desulfitobacterium</taxon>
    </lineage>
</organism>
<dbReference type="EMBL" id="AP008230">
    <property type="protein sequence ID" value="BAE82289.1"/>
    <property type="molecule type" value="Genomic_DNA"/>
</dbReference>
<dbReference type="RefSeq" id="WP_011459109.1">
    <property type="nucleotide sequence ID" value="NC_007907.1"/>
</dbReference>
<dbReference type="SMR" id="Q250K3"/>
<dbReference type="STRING" id="138119.DSY0500"/>
<dbReference type="KEGG" id="dsy:DSY0500"/>
<dbReference type="eggNOG" id="COG0203">
    <property type="taxonomic scope" value="Bacteria"/>
</dbReference>
<dbReference type="HOGENOM" id="CLU_074407_2_2_9"/>
<dbReference type="Proteomes" id="UP000001946">
    <property type="component" value="Chromosome"/>
</dbReference>
<dbReference type="GO" id="GO:0022625">
    <property type="term" value="C:cytosolic large ribosomal subunit"/>
    <property type="evidence" value="ECO:0007669"/>
    <property type="project" value="TreeGrafter"/>
</dbReference>
<dbReference type="GO" id="GO:0003735">
    <property type="term" value="F:structural constituent of ribosome"/>
    <property type="evidence" value="ECO:0007669"/>
    <property type="project" value="InterPro"/>
</dbReference>
<dbReference type="GO" id="GO:0006412">
    <property type="term" value="P:translation"/>
    <property type="evidence" value="ECO:0007669"/>
    <property type="project" value="UniProtKB-UniRule"/>
</dbReference>
<dbReference type="FunFam" id="3.90.1030.10:FF:000001">
    <property type="entry name" value="50S ribosomal protein L17"/>
    <property type="match status" value="1"/>
</dbReference>
<dbReference type="Gene3D" id="3.90.1030.10">
    <property type="entry name" value="Ribosomal protein L17"/>
    <property type="match status" value="1"/>
</dbReference>
<dbReference type="HAMAP" id="MF_01368">
    <property type="entry name" value="Ribosomal_bL17"/>
    <property type="match status" value="1"/>
</dbReference>
<dbReference type="InterPro" id="IPR000456">
    <property type="entry name" value="Ribosomal_bL17"/>
</dbReference>
<dbReference type="InterPro" id="IPR047859">
    <property type="entry name" value="Ribosomal_bL17_CS"/>
</dbReference>
<dbReference type="InterPro" id="IPR036373">
    <property type="entry name" value="Ribosomal_bL17_sf"/>
</dbReference>
<dbReference type="NCBIfam" id="TIGR00059">
    <property type="entry name" value="L17"/>
    <property type="match status" value="1"/>
</dbReference>
<dbReference type="PANTHER" id="PTHR14413:SF16">
    <property type="entry name" value="LARGE RIBOSOMAL SUBUNIT PROTEIN BL17M"/>
    <property type="match status" value="1"/>
</dbReference>
<dbReference type="PANTHER" id="PTHR14413">
    <property type="entry name" value="RIBOSOMAL PROTEIN L17"/>
    <property type="match status" value="1"/>
</dbReference>
<dbReference type="Pfam" id="PF01196">
    <property type="entry name" value="Ribosomal_L17"/>
    <property type="match status" value="1"/>
</dbReference>
<dbReference type="SUPFAM" id="SSF64263">
    <property type="entry name" value="Prokaryotic ribosomal protein L17"/>
    <property type="match status" value="1"/>
</dbReference>
<dbReference type="PROSITE" id="PS01167">
    <property type="entry name" value="RIBOSOMAL_L17"/>
    <property type="match status" value="1"/>
</dbReference>
<reference key="1">
    <citation type="journal article" date="2006" name="J. Bacteriol.">
        <title>Complete genome sequence of the dehalorespiring bacterium Desulfitobacterium hafniense Y51 and comparison with Dehalococcoides ethenogenes 195.</title>
        <authorList>
            <person name="Nonaka H."/>
            <person name="Keresztes G."/>
            <person name="Shinoda Y."/>
            <person name="Ikenaga Y."/>
            <person name="Abe M."/>
            <person name="Naito K."/>
            <person name="Inatomi K."/>
            <person name="Furukawa K."/>
            <person name="Inui M."/>
            <person name="Yukawa H."/>
        </authorList>
    </citation>
    <scope>NUCLEOTIDE SEQUENCE [LARGE SCALE GENOMIC DNA]</scope>
    <source>
        <strain>Y51</strain>
    </source>
</reference>
<keyword id="KW-1185">Reference proteome</keyword>
<keyword id="KW-0687">Ribonucleoprotein</keyword>
<keyword id="KW-0689">Ribosomal protein</keyword>